<reference key="1">
    <citation type="journal article" date="1994" name="Mol. Microbiol.">
        <title>Klebsiella pneumoniae genes for citrate lyase and citrate lyase ligase: localization, sequencing, and expression.</title>
        <authorList>
            <person name="Bott M."/>
            <person name="Dimroth P."/>
        </authorList>
    </citation>
    <scope>NUCLEOTIDE SEQUENCE [GENOMIC DNA]</scope>
    <source>
        <strain>ATCC 13882 / NBRC 13541 / NCTC 8172</strain>
    </source>
</reference>
<keyword id="KW-0067">ATP-binding</keyword>
<keyword id="KW-0547">Nucleotide-binding</keyword>
<keyword id="KW-0808">Transferase</keyword>
<gene>
    <name type="primary">citG</name>
</gene>
<accession>P45414</accession>
<organism>
    <name type="scientific">Klebsiella pneumoniae</name>
    <dbReference type="NCBI Taxonomy" id="573"/>
    <lineage>
        <taxon>Bacteria</taxon>
        <taxon>Pseudomonadati</taxon>
        <taxon>Pseudomonadota</taxon>
        <taxon>Gammaproteobacteria</taxon>
        <taxon>Enterobacterales</taxon>
        <taxon>Enterobacteriaceae</taxon>
        <taxon>Klebsiella/Raoultella group</taxon>
        <taxon>Klebsiella</taxon>
        <taxon>Klebsiella pneumoniae complex</taxon>
    </lineage>
</organism>
<dbReference type="EC" id="2.4.2.52"/>
<dbReference type="EMBL" id="X79817">
    <property type="protein sequence ID" value="CAA56218.1"/>
    <property type="molecule type" value="Genomic_DNA"/>
</dbReference>
<dbReference type="PIR" id="S60777">
    <property type="entry name" value="S60777"/>
</dbReference>
<dbReference type="RefSeq" id="WP_004222628.1">
    <property type="nucleotide sequence ID" value="NZ_WXZN01000037.1"/>
</dbReference>
<dbReference type="BRENDA" id="2.4.2.52">
    <property type="organism ID" value="2814"/>
</dbReference>
<dbReference type="GO" id="GO:0005524">
    <property type="term" value="F:ATP binding"/>
    <property type="evidence" value="ECO:0007669"/>
    <property type="project" value="UniProtKB-KW"/>
</dbReference>
<dbReference type="GO" id="GO:0046917">
    <property type="term" value="F:triphosphoribosyl-dephospho-CoA synthase activity"/>
    <property type="evidence" value="ECO:0007669"/>
    <property type="project" value="UniProtKB-UniRule"/>
</dbReference>
<dbReference type="GO" id="GO:0051191">
    <property type="term" value="P:prosthetic group biosynthetic process"/>
    <property type="evidence" value="ECO:0007669"/>
    <property type="project" value="TreeGrafter"/>
</dbReference>
<dbReference type="FunFam" id="1.10.4200.10:FF:000001">
    <property type="entry name" value="Triphosphoribosyl-dephospho-CoA synthase CitG"/>
    <property type="match status" value="1"/>
</dbReference>
<dbReference type="Gene3D" id="1.10.4200.10">
    <property type="entry name" value="Triphosphoribosyl-dephospho-CoA protein"/>
    <property type="match status" value="2"/>
</dbReference>
<dbReference type="HAMAP" id="MF_00397">
    <property type="entry name" value="CitG"/>
    <property type="match status" value="1"/>
</dbReference>
<dbReference type="InterPro" id="IPR002736">
    <property type="entry name" value="CitG"/>
</dbReference>
<dbReference type="InterPro" id="IPR017551">
    <property type="entry name" value="TriPribosyl-deP-CoA_syn_CitG"/>
</dbReference>
<dbReference type="NCBIfam" id="TIGR03125">
    <property type="entry name" value="citrate_citG"/>
    <property type="match status" value="1"/>
</dbReference>
<dbReference type="PANTHER" id="PTHR30201:SF2">
    <property type="entry name" value="2-(5''-TRIPHOSPHORIBOSYL)-3'-DEPHOSPHOCOENZYME-A SYNTHASE"/>
    <property type="match status" value="1"/>
</dbReference>
<dbReference type="PANTHER" id="PTHR30201">
    <property type="entry name" value="TRIPHOSPHORIBOSYL-DEPHOSPHO-COA SYNTHASE"/>
    <property type="match status" value="1"/>
</dbReference>
<dbReference type="Pfam" id="PF01874">
    <property type="entry name" value="CitG"/>
    <property type="match status" value="1"/>
</dbReference>
<protein>
    <recommendedName>
        <fullName>2-(5''-triphosphoribosyl)-3'-dephosphocoenzyme-A synthase</fullName>
        <shortName>2-(5''-triphosphoribosyl)-3'-dephospho-CoA synthase</shortName>
        <ecNumber>2.4.2.52</ecNumber>
    </recommendedName>
</protein>
<sequence>MSDVLINPARVRRVKPLSAEEVVSAVERALLTEVRLTPKPGLVDIRNAGAHWDMDLASFEASTAVVAPWMEKFFIMGHDTAAVAPEQVLMMLRPVGMACENDMLEATGGVNTHRGAIFAFGLLSAAAGRLVSKGEPIEQHRLCDQVARFCRGMVMQELSSAGGERLSKGEAHFLRYGLSGARGEAESGFLTVRTQAMPVFTRMMEETGDSNLALLQTLLHLMAWNDDTNLVSRGGLAGLNFVQQEAQRLLWQGGVLADGGLEALRQFDDELIARHLSPGGSADLLAVTWFLSAFPAGALFPL</sequence>
<evidence type="ECO:0000250" key="1"/>
<evidence type="ECO:0000305" key="2"/>
<comment type="function">
    <text evidence="1">Catalyzes the formation of 2-(5''-triphosphoribosyl)-3'-dephosphocoenzyme-A, the precursor of the prosthetic group of the holo-acyl carrier protein (gamma chain) of citrate lyase, from ATP and dephospho-CoA.</text>
</comment>
<comment type="catalytic activity">
    <reaction>
        <text>3'-dephospho-CoA + ATP = 2'-(5''-triphospho-alpha-D-ribosyl)-3'-dephospho-CoA + adenine</text>
        <dbReference type="Rhea" id="RHEA:15117"/>
        <dbReference type="ChEBI" id="CHEBI:16708"/>
        <dbReference type="ChEBI" id="CHEBI:30616"/>
        <dbReference type="ChEBI" id="CHEBI:57328"/>
        <dbReference type="ChEBI" id="CHEBI:61378"/>
        <dbReference type="EC" id="2.4.2.52"/>
    </reaction>
</comment>
<comment type="similarity">
    <text evidence="2">Belongs to the CitG/MdcB family.</text>
</comment>
<name>CITG_KLEPN</name>
<feature type="chain" id="PRO_0000214669" description="2-(5''-triphosphoribosyl)-3'-dephosphocoenzyme-A synthase">
    <location>
        <begin position="1"/>
        <end position="302"/>
    </location>
</feature>
<proteinExistence type="inferred from homology"/>